<evidence type="ECO:0000255" key="1">
    <source>
        <dbReference type="HAMAP-Rule" id="MF_01233"/>
    </source>
</evidence>
<evidence type="ECO:0000305" key="2"/>
<name>HDFR_ECO27</name>
<reference key="1">
    <citation type="journal article" date="2009" name="J. Bacteriol.">
        <title>Complete genome sequence and comparative genome analysis of enteropathogenic Escherichia coli O127:H6 strain E2348/69.</title>
        <authorList>
            <person name="Iguchi A."/>
            <person name="Thomson N.R."/>
            <person name="Ogura Y."/>
            <person name="Saunders D."/>
            <person name="Ooka T."/>
            <person name="Henderson I.R."/>
            <person name="Harris D."/>
            <person name="Asadulghani M."/>
            <person name="Kurokawa K."/>
            <person name="Dean P."/>
            <person name="Kenny B."/>
            <person name="Quail M.A."/>
            <person name="Thurston S."/>
            <person name="Dougan G."/>
            <person name="Hayashi T."/>
            <person name="Parkhill J."/>
            <person name="Frankel G."/>
        </authorList>
    </citation>
    <scope>NUCLEOTIDE SEQUENCE [LARGE SCALE GENOMIC DNA]</scope>
    <source>
        <strain>E2348/69 / EPEC</strain>
    </source>
</reference>
<keyword id="KW-0238">DNA-binding</keyword>
<keyword id="KW-1185">Reference proteome</keyword>
<keyword id="KW-0678">Repressor</keyword>
<keyword id="KW-0804">Transcription</keyword>
<keyword id="KW-0805">Transcription regulation</keyword>
<accession>B7UMM1</accession>
<proteinExistence type="inferred from homology"/>
<organism>
    <name type="scientific">Escherichia coli O127:H6 (strain E2348/69 / EPEC)</name>
    <dbReference type="NCBI Taxonomy" id="574521"/>
    <lineage>
        <taxon>Bacteria</taxon>
        <taxon>Pseudomonadati</taxon>
        <taxon>Pseudomonadota</taxon>
        <taxon>Gammaproteobacteria</taxon>
        <taxon>Enterobacterales</taxon>
        <taxon>Enterobacteriaceae</taxon>
        <taxon>Escherichia</taxon>
    </lineage>
</organism>
<protein>
    <recommendedName>
        <fullName evidence="1">HTH-type transcriptional regulator HdfR</fullName>
    </recommendedName>
    <alternativeName>
        <fullName evidence="1">H-NS-dependent flhDC regulator</fullName>
    </alternativeName>
</protein>
<feature type="chain" id="PRO_1000164984" description="HTH-type transcriptional regulator HdfR">
    <location>
        <begin position="1"/>
        <end position="279"/>
    </location>
</feature>
<feature type="domain" description="HTH lysR-type" evidence="1">
    <location>
        <begin position="1"/>
        <end position="58"/>
    </location>
</feature>
<feature type="DNA-binding region" description="H-T-H motif" evidence="1">
    <location>
        <begin position="18"/>
        <end position="37"/>
    </location>
</feature>
<sequence length="279" mass="31746">MDTELLKTFLEVSRTRHFGRAAESLYLTQSAVSFRIRQLENQLGVNLFTRHRNNIRLTAAGEKLLPYAETLMSTWQAARKEVAHTSRHNEFSIGASASLWECMLNQWLGRLYQNQDAHTGLQFEARIAQRQSLVKQLHERQLDLLITTEAPKMDEFSSQLLGYFTLALYTSAPSKLKGDLNYLRLEWGPDFQQHEAGLIGADEVPILTTSSAELAQQQIAMLNGCTWLPVSWARKKGGLHTVVDSTTLSRPLYAIWLQNSDKNALIRDLLKINVLDEVY</sequence>
<comment type="function">
    <text evidence="1">Negatively regulates the transcription of the flagellar master operon flhDC by binding to the upstream region of the operon.</text>
</comment>
<comment type="similarity">
    <text evidence="2">Belongs to the LysR transcriptional regulatory family.</text>
</comment>
<gene>
    <name evidence="1" type="primary">hdfR</name>
    <name type="ordered locus">E2348C_4066</name>
</gene>
<dbReference type="EMBL" id="FM180568">
    <property type="protein sequence ID" value="CAS11614.1"/>
    <property type="molecule type" value="Genomic_DNA"/>
</dbReference>
<dbReference type="RefSeq" id="WP_000379245.1">
    <property type="nucleotide sequence ID" value="NC_011601.1"/>
</dbReference>
<dbReference type="SMR" id="B7UMM1"/>
<dbReference type="GeneID" id="93778187"/>
<dbReference type="KEGG" id="ecg:E2348C_4066"/>
<dbReference type="HOGENOM" id="CLU_039613_8_2_6"/>
<dbReference type="Proteomes" id="UP000008205">
    <property type="component" value="Chromosome"/>
</dbReference>
<dbReference type="GO" id="GO:0003677">
    <property type="term" value="F:DNA binding"/>
    <property type="evidence" value="ECO:0007669"/>
    <property type="project" value="UniProtKB-KW"/>
</dbReference>
<dbReference type="GO" id="GO:0003700">
    <property type="term" value="F:DNA-binding transcription factor activity"/>
    <property type="evidence" value="ECO:0007669"/>
    <property type="project" value="UniProtKB-UniRule"/>
</dbReference>
<dbReference type="GO" id="GO:0045892">
    <property type="term" value="P:negative regulation of DNA-templated transcription"/>
    <property type="evidence" value="ECO:0007669"/>
    <property type="project" value="UniProtKB-UniRule"/>
</dbReference>
<dbReference type="FunFam" id="1.10.10.10:FF:000001">
    <property type="entry name" value="LysR family transcriptional regulator"/>
    <property type="match status" value="1"/>
</dbReference>
<dbReference type="Gene3D" id="3.40.190.10">
    <property type="entry name" value="Periplasmic binding protein-like II"/>
    <property type="match status" value="2"/>
</dbReference>
<dbReference type="Gene3D" id="1.10.10.10">
    <property type="entry name" value="Winged helix-like DNA-binding domain superfamily/Winged helix DNA-binding domain"/>
    <property type="match status" value="1"/>
</dbReference>
<dbReference type="HAMAP" id="MF_01233">
    <property type="entry name" value="HTH_type_HdfR"/>
    <property type="match status" value="1"/>
</dbReference>
<dbReference type="InterPro" id="IPR050176">
    <property type="entry name" value="LTTR"/>
</dbReference>
<dbReference type="InterPro" id="IPR005119">
    <property type="entry name" value="LysR_subst-bd"/>
</dbReference>
<dbReference type="InterPro" id="IPR020890">
    <property type="entry name" value="Tscrpt_reg_HTH_HdfR"/>
</dbReference>
<dbReference type="InterPro" id="IPR000847">
    <property type="entry name" value="Tscrpt_reg_HTH_LysR"/>
</dbReference>
<dbReference type="InterPro" id="IPR036388">
    <property type="entry name" value="WH-like_DNA-bd_sf"/>
</dbReference>
<dbReference type="InterPro" id="IPR036390">
    <property type="entry name" value="WH_DNA-bd_sf"/>
</dbReference>
<dbReference type="NCBIfam" id="NF002946">
    <property type="entry name" value="PRK03601.1"/>
    <property type="match status" value="1"/>
</dbReference>
<dbReference type="PANTHER" id="PTHR30579:SF8">
    <property type="entry name" value="HTH-TYPE TRANSCRIPTIONAL REGULATOR HDFR"/>
    <property type="match status" value="1"/>
</dbReference>
<dbReference type="PANTHER" id="PTHR30579">
    <property type="entry name" value="TRANSCRIPTIONAL REGULATOR"/>
    <property type="match status" value="1"/>
</dbReference>
<dbReference type="Pfam" id="PF00126">
    <property type="entry name" value="HTH_1"/>
    <property type="match status" value="1"/>
</dbReference>
<dbReference type="Pfam" id="PF03466">
    <property type="entry name" value="LysR_substrate"/>
    <property type="match status" value="1"/>
</dbReference>
<dbReference type="PRINTS" id="PR00039">
    <property type="entry name" value="HTHLYSR"/>
</dbReference>
<dbReference type="SUPFAM" id="SSF53850">
    <property type="entry name" value="Periplasmic binding protein-like II"/>
    <property type="match status" value="1"/>
</dbReference>
<dbReference type="SUPFAM" id="SSF46785">
    <property type="entry name" value="Winged helix' DNA-binding domain"/>
    <property type="match status" value="1"/>
</dbReference>
<dbReference type="PROSITE" id="PS50931">
    <property type="entry name" value="HTH_LYSR"/>
    <property type="match status" value="1"/>
</dbReference>